<keyword id="KW-0001">2Fe-2S</keyword>
<keyword id="KW-0004">4Fe-4S</keyword>
<keyword id="KW-0093">Biotin biosynthesis</keyword>
<keyword id="KW-0408">Iron</keyword>
<keyword id="KW-0411">Iron-sulfur</keyword>
<keyword id="KW-0479">Metal-binding</keyword>
<keyword id="KW-1185">Reference proteome</keyword>
<keyword id="KW-0949">S-adenosyl-L-methionine</keyword>
<keyword id="KW-0808">Transferase</keyword>
<evidence type="ECO:0000255" key="1">
    <source>
        <dbReference type="HAMAP-Rule" id="MF_01694"/>
    </source>
</evidence>
<evidence type="ECO:0000255" key="2">
    <source>
        <dbReference type="PROSITE-ProRule" id="PRU01266"/>
    </source>
</evidence>
<sequence>MPQIRNDWTIEEVQNLLQMPLNDLVFEAQTVHRQHFNPNEVQVSTLLSIKTGACPEDCKYCPQSAHYHTGLDRERLMAVESVLAEAQAAKEKGASRFCMGAAWRNPKDRDMPYVIEMIKGVKALGLESCMTLGMLSNEQAKMLQQAGLDYYNHNLDTSPEFYGDIITTRTYQDRLNTLNNVRDAGMKVCAGGIVGMGESVTDRASLLVQLANLPKHPESVPINMLVKVEGTPFAKLEDLDNFEFVRTVAVARILMPASHVRLSAGREDMNDEMQALCFLAGANSIFYGEKLLTTANPEADADLRLFERLGIKPEQRDGYDDEVHTAVIEDAIKEQQNPVRYYDAS</sequence>
<accession>Q5QZ16</accession>
<gene>
    <name evidence="1" type="primary">bioB</name>
    <name type="ordered locus">IL1324</name>
</gene>
<protein>
    <recommendedName>
        <fullName evidence="1">Biotin synthase</fullName>
        <ecNumber evidence="1">2.8.1.6</ecNumber>
    </recommendedName>
</protein>
<reference key="1">
    <citation type="journal article" date="2004" name="Proc. Natl. Acad. Sci. U.S.A.">
        <title>Genome sequence of the deep-sea gamma-proteobacterium Idiomarina loihiensis reveals amino acid fermentation as a source of carbon and energy.</title>
        <authorList>
            <person name="Hou S."/>
            <person name="Saw J.H."/>
            <person name="Lee K.S."/>
            <person name="Freitas T.A."/>
            <person name="Belisle C."/>
            <person name="Kawarabayasi Y."/>
            <person name="Donachie S.P."/>
            <person name="Pikina A."/>
            <person name="Galperin M.Y."/>
            <person name="Koonin E.V."/>
            <person name="Makarova K.S."/>
            <person name="Omelchenko M.V."/>
            <person name="Sorokin A."/>
            <person name="Wolf Y.I."/>
            <person name="Li Q.X."/>
            <person name="Keum Y.S."/>
            <person name="Campbell S."/>
            <person name="Denery J."/>
            <person name="Aizawa S."/>
            <person name="Shibata S."/>
            <person name="Malahoff A."/>
            <person name="Alam M."/>
        </authorList>
    </citation>
    <scope>NUCLEOTIDE SEQUENCE [LARGE SCALE GENOMIC DNA]</scope>
    <source>
        <strain>ATCC BAA-735 / DSM 15497 / L2-TR</strain>
    </source>
</reference>
<organism>
    <name type="scientific">Idiomarina loihiensis (strain ATCC BAA-735 / DSM 15497 / L2-TR)</name>
    <dbReference type="NCBI Taxonomy" id="283942"/>
    <lineage>
        <taxon>Bacteria</taxon>
        <taxon>Pseudomonadati</taxon>
        <taxon>Pseudomonadota</taxon>
        <taxon>Gammaproteobacteria</taxon>
        <taxon>Alteromonadales</taxon>
        <taxon>Idiomarinaceae</taxon>
        <taxon>Idiomarina</taxon>
    </lineage>
</organism>
<comment type="function">
    <text evidence="1">Catalyzes the conversion of dethiobiotin (DTB) to biotin by the insertion of a sulfur atom into dethiobiotin via a radical-based mechanism.</text>
</comment>
<comment type="catalytic activity">
    <reaction evidence="1">
        <text>(4R,5S)-dethiobiotin + (sulfur carrier)-SH + 2 reduced [2Fe-2S]-[ferredoxin] + 2 S-adenosyl-L-methionine = (sulfur carrier)-H + biotin + 2 5'-deoxyadenosine + 2 L-methionine + 2 oxidized [2Fe-2S]-[ferredoxin]</text>
        <dbReference type="Rhea" id="RHEA:22060"/>
        <dbReference type="Rhea" id="RHEA-COMP:10000"/>
        <dbReference type="Rhea" id="RHEA-COMP:10001"/>
        <dbReference type="Rhea" id="RHEA-COMP:14737"/>
        <dbReference type="Rhea" id="RHEA-COMP:14739"/>
        <dbReference type="ChEBI" id="CHEBI:17319"/>
        <dbReference type="ChEBI" id="CHEBI:29917"/>
        <dbReference type="ChEBI" id="CHEBI:33737"/>
        <dbReference type="ChEBI" id="CHEBI:33738"/>
        <dbReference type="ChEBI" id="CHEBI:57586"/>
        <dbReference type="ChEBI" id="CHEBI:57844"/>
        <dbReference type="ChEBI" id="CHEBI:59789"/>
        <dbReference type="ChEBI" id="CHEBI:64428"/>
        <dbReference type="ChEBI" id="CHEBI:149473"/>
        <dbReference type="EC" id="2.8.1.6"/>
    </reaction>
</comment>
<comment type="cofactor">
    <cofactor evidence="1">
        <name>[4Fe-4S] cluster</name>
        <dbReference type="ChEBI" id="CHEBI:49883"/>
    </cofactor>
    <text evidence="1">Binds 1 [4Fe-4S] cluster. The cluster is coordinated with 3 cysteines and an exchangeable S-adenosyl-L-methionine.</text>
</comment>
<comment type="cofactor">
    <cofactor evidence="1">
        <name>[2Fe-2S] cluster</name>
        <dbReference type="ChEBI" id="CHEBI:190135"/>
    </cofactor>
    <text evidence="1">Binds 1 [2Fe-2S] cluster. The cluster is coordinated with 3 cysteines and 1 arginine.</text>
</comment>
<comment type="pathway">
    <text evidence="1">Cofactor biosynthesis; biotin biosynthesis; biotin from 7,8-diaminononanoate: step 2/2.</text>
</comment>
<comment type="subunit">
    <text evidence="1">Homodimer.</text>
</comment>
<comment type="similarity">
    <text evidence="1">Belongs to the radical SAM superfamily. Biotin synthase family.</text>
</comment>
<proteinExistence type="inferred from homology"/>
<feature type="chain" id="PRO_0000381432" description="Biotin synthase">
    <location>
        <begin position="1"/>
        <end position="345"/>
    </location>
</feature>
<feature type="domain" description="Radical SAM core" evidence="2">
    <location>
        <begin position="39"/>
        <end position="266"/>
    </location>
</feature>
<feature type="binding site" evidence="1">
    <location>
        <position position="54"/>
    </location>
    <ligand>
        <name>[4Fe-4S] cluster</name>
        <dbReference type="ChEBI" id="CHEBI:49883"/>
        <note>4Fe-4S-S-AdoMet</note>
    </ligand>
</feature>
<feature type="binding site" evidence="1">
    <location>
        <position position="58"/>
    </location>
    <ligand>
        <name>[4Fe-4S] cluster</name>
        <dbReference type="ChEBI" id="CHEBI:49883"/>
        <note>4Fe-4S-S-AdoMet</note>
    </ligand>
</feature>
<feature type="binding site" evidence="1">
    <location>
        <position position="61"/>
    </location>
    <ligand>
        <name>[4Fe-4S] cluster</name>
        <dbReference type="ChEBI" id="CHEBI:49883"/>
        <note>4Fe-4S-S-AdoMet</note>
    </ligand>
</feature>
<feature type="binding site" evidence="1">
    <location>
        <position position="98"/>
    </location>
    <ligand>
        <name>[2Fe-2S] cluster</name>
        <dbReference type="ChEBI" id="CHEBI:190135"/>
    </ligand>
</feature>
<feature type="binding site" evidence="1">
    <location>
        <position position="129"/>
    </location>
    <ligand>
        <name>[2Fe-2S] cluster</name>
        <dbReference type="ChEBI" id="CHEBI:190135"/>
    </ligand>
</feature>
<feature type="binding site" evidence="1">
    <location>
        <position position="189"/>
    </location>
    <ligand>
        <name>[2Fe-2S] cluster</name>
        <dbReference type="ChEBI" id="CHEBI:190135"/>
    </ligand>
</feature>
<feature type="binding site" evidence="1">
    <location>
        <position position="261"/>
    </location>
    <ligand>
        <name>[2Fe-2S] cluster</name>
        <dbReference type="ChEBI" id="CHEBI:190135"/>
    </ligand>
</feature>
<name>BIOB_IDILO</name>
<dbReference type="EC" id="2.8.1.6" evidence="1"/>
<dbReference type="EMBL" id="AE017340">
    <property type="protein sequence ID" value="AAV82164.1"/>
    <property type="molecule type" value="Genomic_DNA"/>
</dbReference>
<dbReference type="RefSeq" id="WP_011234570.1">
    <property type="nucleotide sequence ID" value="NC_006512.1"/>
</dbReference>
<dbReference type="SMR" id="Q5QZ16"/>
<dbReference type="STRING" id="283942.IL1324"/>
<dbReference type="GeneID" id="41336500"/>
<dbReference type="KEGG" id="ilo:IL1324"/>
<dbReference type="eggNOG" id="COG0502">
    <property type="taxonomic scope" value="Bacteria"/>
</dbReference>
<dbReference type="HOGENOM" id="CLU_033172_1_2_6"/>
<dbReference type="OrthoDB" id="9786826at2"/>
<dbReference type="UniPathway" id="UPA00078">
    <property type="reaction ID" value="UER00162"/>
</dbReference>
<dbReference type="Proteomes" id="UP000001171">
    <property type="component" value="Chromosome"/>
</dbReference>
<dbReference type="GO" id="GO:0051537">
    <property type="term" value="F:2 iron, 2 sulfur cluster binding"/>
    <property type="evidence" value="ECO:0007669"/>
    <property type="project" value="UniProtKB-KW"/>
</dbReference>
<dbReference type="GO" id="GO:0051539">
    <property type="term" value="F:4 iron, 4 sulfur cluster binding"/>
    <property type="evidence" value="ECO:0007669"/>
    <property type="project" value="UniProtKB-KW"/>
</dbReference>
<dbReference type="GO" id="GO:0004076">
    <property type="term" value="F:biotin synthase activity"/>
    <property type="evidence" value="ECO:0007669"/>
    <property type="project" value="UniProtKB-UniRule"/>
</dbReference>
<dbReference type="GO" id="GO:0005506">
    <property type="term" value="F:iron ion binding"/>
    <property type="evidence" value="ECO:0007669"/>
    <property type="project" value="UniProtKB-UniRule"/>
</dbReference>
<dbReference type="GO" id="GO:0009102">
    <property type="term" value="P:biotin biosynthetic process"/>
    <property type="evidence" value="ECO:0007669"/>
    <property type="project" value="UniProtKB-UniRule"/>
</dbReference>
<dbReference type="CDD" id="cd01335">
    <property type="entry name" value="Radical_SAM"/>
    <property type="match status" value="1"/>
</dbReference>
<dbReference type="FunFam" id="3.20.20.70:FF:000011">
    <property type="entry name" value="Biotin synthase"/>
    <property type="match status" value="1"/>
</dbReference>
<dbReference type="Gene3D" id="3.20.20.70">
    <property type="entry name" value="Aldolase class I"/>
    <property type="match status" value="1"/>
</dbReference>
<dbReference type="HAMAP" id="MF_01694">
    <property type="entry name" value="BioB"/>
    <property type="match status" value="1"/>
</dbReference>
<dbReference type="InterPro" id="IPR013785">
    <property type="entry name" value="Aldolase_TIM"/>
</dbReference>
<dbReference type="InterPro" id="IPR010722">
    <property type="entry name" value="BATS_dom"/>
</dbReference>
<dbReference type="InterPro" id="IPR002684">
    <property type="entry name" value="Biotin_synth/BioAB"/>
</dbReference>
<dbReference type="InterPro" id="IPR024177">
    <property type="entry name" value="Biotin_synthase"/>
</dbReference>
<dbReference type="InterPro" id="IPR006638">
    <property type="entry name" value="Elp3/MiaA/NifB-like_rSAM"/>
</dbReference>
<dbReference type="InterPro" id="IPR007197">
    <property type="entry name" value="rSAM"/>
</dbReference>
<dbReference type="NCBIfam" id="TIGR00433">
    <property type="entry name" value="bioB"/>
    <property type="match status" value="1"/>
</dbReference>
<dbReference type="PANTHER" id="PTHR22976">
    <property type="entry name" value="BIOTIN SYNTHASE"/>
    <property type="match status" value="1"/>
</dbReference>
<dbReference type="PANTHER" id="PTHR22976:SF2">
    <property type="entry name" value="BIOTIN SYNTHASE, MITOCHONDRIAL"/>
    <property type="match status" value="1"/>
</dbReference>
<dbReference type="Pfam" id="PF06968">
    <property type="entry name" value="BATS"/>
    <property type="match status" value="1"/>
</dbReference>
<dbReference type="Pfam" id="PF04055">
    <property type="entry name" value="Radical_SAM"/>
    <property type="match status" value="1"/>
</dbReference>
<dbReference type="PIRSF" id="PIRSF001619">
    <property type="entry name" value="Biotin_synth"/>
    <property type="match status" value="1"/>
</dbReference>
<dbReference type="SFLD" id="SFLDF00272">
    <property type="entry name" value="biotin_synthase"/>
    <property type="match status" value="1"/>
</dbReference>
<dbReference type="SFLD" id="SFLDS00029">
    <property type="entry name" value="Radical_SAM"/>
    <property type="match status" value="1"/>
</dbReference>
<dbReference type="SMART" id="SM00876">
    <property type="entry name" value="BATS"/>
    <property type="match status" value="1"/>
</dbReference>
<dbReference type="SMART" id="SM00729">
    <property type="entry name" value="Elp3"/>
    <property type="match status" value="1"/>
</dbReference>
<dbReference type="SUPFAM" id="SSF102114">
    <property type="entry name" value="Radical SAM enzymes"/>
    <property type="match status" value="1"/>
</dbReference>
<dbReference type="PROSITE" id="PS51918">
    <property type="entry name" value="RADICAL_SAM"/>
    <property type="match status" value="1"/>
</dbReference>